<reference key="1">
    <citation type="journal article" date="2009" name="PLoS Pathog.">
        <title>Genomic evidence for the evolution of Streptococcus equi: host restriction, increased virulence, and genetic exchange with human pathogens.</title>
        <authorList>
            <person name="Holden M.T.G."/>
            <person name="Heather Z."/>
            <person name="Paillot R."/>
            <person name="Steward K.F."/>
            <person name="Webb K."/>
            <person name="Ainslie F."/>
            <person name="Jourdan T."/>
            <person name="Bason N.C."/>
            <person name="Holroyd N.E."/>
            <person name="Mungall K."/>
            <person name="Quail M.A."/>
            <person name="Sanders M."/>
            <person name="Simmonds M."/>
            <person name="Willey D."/>
            <person name="Brooks K."/>
            <person name="Aanensen D.M."/>
            <person name="Spratt B.G."/>
            <person name="Jolley K.A."/>
            <person name="Maiden M.C.J."/>
            <person name="Kehoe M."/>
            <person name="Chanter N."/>
            <person name="Bentley S.D."/>
            <person name="Robinson C."/>
            <person name="Maskell D.J."/>
            <person name="Parkhill J."/>
            <person name="Waller A.S."/>
        </authorList>
    </citation>
    <scope>NUCLEOTIDE SEQUENCE [LARGE SCALE GENOMIC DNA]</scope>
    <source>
        <strain>H70</strain>
    </source>
</reference>
<organism>
    <name type="scientific">Streptococcus equi subsp. zooepidemicus (strain H70)</name>
    <dbReference type="NCBI Taxonomy" id="553483"/>
    <lineage>
        <taxon>Bacteria</taxon>
        <taxon>Bacillati</taxon>
        <taxon>Bacillota</taxon>
        <taxon>Bacilli</taxon>
        <taxon>Lactobacillales</taxon>
        <taxon>Streptococcaceae</taxon>
        <taxon>Streptococcus</taxon>
    </lineage>
</organism>
<name>ALR_STRS7</name>
<evidence type="ECO:0000255" key="1">
    <source>
        <dbReference type="HAMAP-Rule" id="MF_01201"/>
    </source>
</evidence>
<proteinExistence type="inferred from homology"/>
<dbReference type="EC" id="5.1.1.1" evidence="1"/>
<dbReference type="EMBL" id="FM204884">
    <property type="protein sequence ID" value="CAX00342.1"/>
    <property type="molecule type" value="Genomic_DNA"/>
</dbReference>
<dbReference type="SMR" id="C0MEB7"/>
<dbReference type="KEGG" id="seq:SZO_16090"/>
<dbReference type="eggNOG" id="COG0787">
    <property type="taxonomic scope" value="Bacteria"/>
</dbReference>
<dbReference type="HOGENOM" id="CLU_028393_2_1_9"/>
<dbReference type="UniPathway" id="UPA00042">
    <property type="reaction ID" value="UER00497"/>
</dbReference>
<dbReference type="Proteomes" id="UP000001368">
    <property type="component" value="Chromosome"/>
</dbReference>
<dbReference type="GO" id="GO:0005829">
    <property type="term" value="C:cytosol"/>
    <property type="evidence" value="ECO:0007669"/>
    <property type="project" value="TreeGrafter"/>
</dbReference>
<dbReference type="GO" id="GO:0008784">
    <property type="term" value="F:alanine racemase activity"/>
    <property type="evidence" value="ECO:0007669"/>
    <property type="project" value="UniProtKB-UniRule"/>
</dbReference>
<dbReference type="GO" id="GO:0030170">
    <property type="term" value="F:pyridoxal phosphate binding"/>
    <property type="evidence" value="ECO:0007669"/>
    <property type="project" value="UniProtKB-UniRule"/>
</dbReference>
<dbReference type="GO" id="GO:0030632">
    <property type="term" value="P:D-alanine biosynthetic process"/>
    <property type="evidence" value="ECO:0007669"/>
    <property type="project" value="UniProtKB-UniRule"/>
</dbReference>
<dbReference type="GO" id="GO:0009252">
    <property type="term" value="P:peptidoglycan biosynthetic process"/>
    <property type="evidence" value="ECO:0007669"/>
    <property type="project" value="TreeGrafter"/>
</dbReference>
<dbReference type="CDD" id="cd00430">
    <property type="entry name" value="PLPDE_III_AR"/>
    <property type="match status" value="1"/>
</dbReference>
<dbReference type="FunFam" id="2.40.37.10:FF:000006">
    <property type="entry name" value="Alanine racemase"/>
    <property type="match status" value="1"/>
</dbReference>
<dbReference type="FunFam" id="3.20.20.10:FF:000002">
    <property type="entry name" value="Alanine racemase"/>
    <property type="match status" value="1"/>
</dbReference>
<dbReference type="Gene3D" id="3.20.20.10">
    <property type="entry name" value="Alanine racemase"/>
    <property type="match status" value="1"/>
</dbReference>
<dbReference type="Gene3D" id="2.40.37.10">
    <property type="entry name" value="Lyase, Ornithine Decarboxylase, Chain A, domain 1"/>
    <property type="match status" value="1"/>
</dbReference>
<dbReference type="HAMAP" id="MF_01201">
    <property type="entry name" value="Ala_racemase"/>
    <property type="match status" value="1"/>
</dbReference>
<dbReference type="InterPro" id="IPR000821">
    <property type="entry name" value="Ala_racemase"/>
</dbReference>
<dbReference type="InterPro" id="IPR009006">
    <property type="entry name" value="Ala_racemase/Decarboxylase_C"/>
</dbReference>
<dbReference type="InterPro" id="IPR011079">
    <property type="entry name" value="Ala_racemase_C"/>
</dbReference>
<dbReference type="InterPro" id="IPR001608">
    <property type="entry name" value="Ala_racemase_N"/>
</dbReference>
<dbReference type="InterPro" id="IPR020622">
    <property type="entry name" value="Ala_racemase_pyridoxalP-BS"/>
</dbReference>
<dbReference type="InterPro" id="IPR029066">
    <property type="entry name" value="PLP-binding_barrel"/>
</dbReference>
<dbReference type="NCBIfam" id="TIGR00492">
    <property type="entry name" value="alr"/>
    <property type="match status" value="1"/>
</dbReference>
<dbReference type="PANTHER" id="PTHR30511">
    <property type="entry name" value="ALANINE RACEMASE"/>
    <property type="match status" value="1"/>
</dbReference>
<dbReference type="PANTHER" id="PTHR30511:SF0">
    <property type="entry name" value="ALANINE RACEMASE, CATABOLIC-RELATED"/>
    <property type="match status" value="1"/>
</dbReference>
<dbReference type="Pfam" id="PF00842">
    <property type="entry name" value="Ala_racemase_C"/>
    <property type="match status" value="1"/>
</dbReference>
<dbReference type="Pfam" id="PF01168">
    <property type="entry name" value="Ala_racemase_N"/>
    <property type="match status" value="1"/>
</dbReference>
<dbReference type="PRINTS" id="PR00992">
    <property type="entry name" value="ALARACEMASE"/>
</dbReference>
<dbReference type="SMART" id="SM01005">
    <property type="entry name" value="Ala_racemase_C"/>
    <property type="match status" value="1"/>
</dbReference>
<dbReference type="SUPFAM" id="SSF50621">
    <property type="entry name" value="Alanine racemase C-terminal domain-like"/>
    <property type="match status" value="1"/>
</dbReference>
<dbReference type="SUPFAM" id="SSF51419">
    <property type="entry name" value="PLP-binding barrel"/>
    <property type="match status" value="1"/>
</dbReference>
<dbReference type="PROSITE" id="PS00395">
    <property type="entry name" value="ALANINE_RACEMASE"/>
    <property type="match status" value="1"/>
</dbReference>
<keyword id="KW-0413">Isomerase</keyword>
<keyword id="KW-0663">Pyridoxal phosphate</keyword>
<comment type="function">
    <text evidence="1">Catalyzes the interconversion of L-alanine and D-alanine. May also act on other amino acids.</text>
</comment>
<comment type="catalytic activity">
    <reaction evidence="1">
        <text>L-alanine = D-alanine</text>
        <dbReference type="Rhea" id="RHEA:20249"/>
        <dbReference type="ChEBI" id="CHEBI:57416"/>
        <dbReference type="ChEBI" id="CHEBI:57972"/>
        <dbReference type="EC" id="5.1.1.1"/>
    </reaction>
</comment>
<comment type="cofactor">
    <cofactor evidence="1">
        <name>pyridoxal 5'-phosphate</name>
        <dbReference type="ChEBI" id="CHEBI:597326"/>
    </cofactor>
</comment>
<comment type="pathway">
    <text evidence="1">Amino-acid biosynthesis; D-alanine biosynthesis; D-alanine from L-alanine: step 1/1.</text>
</comment>
<comment type="similarity">
    <text evidence="1">Belongs to the alanine racemase family.</text>
</comment>
<feature type="chain" id="PRO_1000213842" description="Alanine racemase">
    <location>
        <begin position="1"/>
        <end position="366"/>
    </location>
</feature>
<feature type="active site" description="Proton acceptor; specific for D-alanine" evidence="1">
    <location>
        <position position="40"/>
    </location>
</feature>
<feature type="active site" description="Proton acceptor; specific for L-alanine" evidence="1">
    <location>
        <position position="263"/>
    </location>
</feature>
<feature type="binding site" evidence="1">
    <location>
        <position position="136"/>
    </location>
    <ligand>
        <name>substrate</name>
    </ligand>
</feature>
<feature type="binding site" evidence="1">
    <location>
        <position position="310"/>
    </location>
    <ligand>
        <name>substrate</name>
    </ligand>
</feature>
<feature type="modified residue" description="N6-(pyridoxal phosphate)lysine" evidence="1">
    <location>
        <position position="40"/>
    </location>
</feature>
<sequence length="366" mass="40114">MISSLHRPTVARVDLEAIQANIDKIQRHLPKKVKTYAVVKANAYGHGAVAVSKAVEDQVDGYCVSNLDEALELRQAGIDKEILILGVILASELQLAIKHQLTITVASLEWLELAKKESVDFSQLHVHVKVDSGMGRIGVRSLAEANQLISILSDMGVQLDGIFTHFATADESDHAMFDKQLTFFKQLVEQLDKRPALVHASNSATSLWHSETIFSAIRLGIVIYGLNPSGNSLSLPCPLKEALSLESRLVHVKQIQAGDSVGYGASYVAAEPEYVGTLPIGYADGWTRNMQGFKVLVEGEFCDIIGRVSMDQLTIRLTKAYPIGTKVTLIGQQGKQVITATDVADYRGTINYEVLCLLSDRIPREY</sequence>
<gene>
    <name type="primary">alr</name>
    <name type="ordered locus">SZO_16090</name>
</gene>
<accession>C0MEB7</accession>
<protein>
    <recommendedName>
        <fullName evidence="1">Alanine racemase</fullName>
        <ecNumber evidence="1">5.1.1.1</ecNumber>
    </recommendedName>
</protein>